<reference key="1">
    <citation type="journal article" date="2008" name="PLoS ONE">
        <title>Genome sequence of Brucella abortus vaccine strain S19 compared to virulent strains yields candidate virulence genes.</title>
        <authorList>
            <person name="Crasta O.R."/>
            <person name="Folkerts O."/>
            <person name="Fei Z."/>
            <person name="Mane S.P."/>
            <person name="Evans C."/>
            <person name="Martino-Catt S."/>
            <person name="Bricker B."/>
            <person name="Yu G."/>
            <person name="Du L."/>
            <person name="Sobral B.W."/>
        </authorList>
    </citation>
    <scope>NUCLEOTIDE SEQUENCE [LARGE SCALE GENOMIC DNA]</scope>
    <source>
        <strain>S19</strain>
    </source>
</reference>
<sequence length="155" mass="17402">MSENTIYSGLKQLGSHTDIPLTPEEAVLERVANPQEGTPYCVRFTAPEFSSLCPMTGQPDFAHLVIDYVPGKWLVESKSLKLFLFSFRNHGAFHEDCTVTIGKRLVDLLEPEWLRIGGYWYPRGGIPIDVFYQTGAAPLNVWIPEQGVANYRGRG</sequence>
<gene>
    <name evidence="1" type="primary">queF</name>
    <name type="ordered locus">BAbS19_I11220</name>
</gene>
<organism>
    <name type="scientific">Brucella abortus (strain S19)</name>
    <dbReference type="NCBI Taxonomy" id="430066"/>
    <lineage>
        <taxon>Bacteria</taxon>
        <taxon>Pseudomonadati</taxon>
        <taxon>Pseudomonadota</taxon>
        <taxon>Alphaproteobacteria</taxon>
        <taxon>Hyphomicrobiales</taxon>
        <taxon>Brucellaceae</taxon>
        <taxon>Brucella/Ochrobactrum group</taxon>
        <taxon>Brucella</taxon>
    </lineage>
</organism>
<keyword id="KW-0963">Cytoplasm</keyword>
<keyword id="KW-0521">NADP</keyword>
<keyword id="KW-0560">Oxidoreductase</keyword>
<keyword id="KW-0671">Queuosine biosynthesis</keyword>
<dbReference type="EC" id="1.7.1.13" evidence="1"/>
<dbReference type="EMBL" id="CP000887">
    <property type="protein sequence ID" value="ACD72627.1"/>
    <property type="molecule type" value="Genomic_DNA"/>
</dbReference>
<dbReference type="RefSeq" id="WP_002964310.1">
    <property type="nucleotide sequence ID" value="NC_010742.1"/>
</dbReference>
<dbReference type="SMR" id="B2S630"/>
<dbReference type="DNASU" id="3787830"/>
<dbReference type="GeneID" id="93016485"/>
<dbReference type="KEGG" id="bmc:BAbS19_I11220"/>
<dbReference type="HOGENOM" id="CLU_102489_0_1_5"/>
<dbReference type="UniPathway" id="UPA00392"/>
<dbReference type="Proteomes" id="UP000002565">
    <property type="component" value="Chromosome 1"/>
</dbReference>
<dbReference type="GO" id="GO:0005737">
    <property type="term" value="C:cytoplasm"/>
    <property type="evidence" value="ECO:0007669"/>
    <property type="project" value="UniProtKB-SubCell"/>
</dbReference>
<dbReference type="GO" id="GO:0033739">
    <property type="term" value="F:preQ1 synthase activity"/>
    <property type="evidence" value="ECO:0007669"/>
    <property type="project" value="UniProtKB-UniRule"/>
</dbReference>
<dbReference type="GO" id="GO:0008616">
    <property type="term" value="P:queuosine biosynthetic process"/>
    <property type="evidence" value="ECO:0007669"/>
    <property type="project" value="UniProtKB-UniRule"/>
</dbReference>
<dbReference type="GO" id="GO:0006400">
    <property type="term" value="P:tRNA modification"/>
    <property type="evidence" value="ECO:0007669"/>
    <property type="project" value="UniProtKB-UniRule"/>
</dbReference>
<dbReference type="Gene3D" id="3.30.1130.10">
    <property type="match status" value="1"/>
</dbReference>
<dbReference type="HAMAP" id="MF_00818">
    <property type="entry name" value="QueF_type1"/>
    <property type="match status" value="1"/>
</dbReference>
<dbReference type="InterPro" id="IPR043133">
    <property type="entry name" value="GTP-CH-I_C/QueF"/>
</dbReference>
<dbReference type="InterPro" id="IPR050084">
    <property type="entry name" value="NADPH_dep_7-cyano-7-deazaG_red"/>
</dbReference>
<dbReference type="InterPro" id="IPR029500">
    <property type="entry name" value="QueF"/>
</dbReference>
<dbReference type="InterPro" id="IPR016856">
    <property type="entry name" value="QueF_type1"/>
</dbReference>
<dbReference type="NCBIfam" id="TIGR03139">
    <property type="entry name" value="QueF-II"/>
    <property type="match status" value="1"/>
</dbReference>
<dbReference type="PANTHER" id="PTHR34354">
    <property type="entry name" value="NADPH-DEPENDENT 7-CYANO-7-DEAZAGUANINE REDUCTASE"/>
    <property type="match status" value="1"/>
</dbReference>
<dbReference type="PANTHER" id="PTHR34354:SF1">
    <property type="entry name" value="NADPH-DEPENDENT 7-CYANO-7-DEAZAGUANINE REDUCTASE"/>
    <property type="match status" value="1"/>
</dbReference>
<dbReference type="Pfam" id="PF14489">
    <property type="entry name" value="QueF"/>
    <property type="match status" value="1"/>
</dbReference>
<dbReference type="SUPFAM" id="SSF55620">
    <property type="entry name" value="Tetrahydrobiopterin biosynthesis enzymes-like"/>
    <property type="match status" value="1"/>
</dbReference>
<proteinExistence type="inferred from homology"/>
<evidence type="ECO:0000255" key="1">
    <source>
        <dbReference type="HAMAP-Rule" id="MF_00818"/>
    </source>
</evidence>
<feature type="chain" id="PRO_1000134297" description="NADPH-dependent 7-cyano-7-deazaguanine reductase">
    <location>
        <begin position="1"/>
        <end position="155"/>
    </location>
</feature>
<feature type="active site" description="Thioimide intermediate" evidence="1">
    <location>
        <position position="53"/>
    </location>
</feature>
<feature type="active site" description="Proton donor" evidence="1">
    <location>
        <position position="60"/>
    </location>
</feature>
<feature type="binding site" evidence="1">
    <location>
        <begin position="75"/>
        <end position="77"/>
    </location>
    <ligand>
        <name>substrate</name>
    </ligand>
</feature>
<feature type="binding site" evidence="1">
    <location>
        <begin position="94"/>
        <end position="95"/>
    </location>
    <ligand>
        <name>substrate</name>
    </ligand>
</feature>
<name>QUEF_BRUA1</name>
<comment type="function">
    <text evidence="1">Catalyzes the NADPH-dependent reduction of 7-cyano-7-deazaguanine (preQ0) to 7-aminomethyl-7-deazaguanine (preQ1).</text>
</comment>
<comment type="catalytic activity">
    <reaction evidence="1">
        <text>7-aminomethyl-7-carbaguanine + 2 NADP(+) = 7-cyano-7-deazaguanine + 2 NADPH + 3 H(+)</text>
        <dbReference type="Rhea" id="RHEA:13409"/>
        <dbReference type="ChEBI" id="CHEBI:15378"/>
        <dbReference type="ChEBI" id="CHEBI:45075"/>
        <dbReference type="ChEBI" id="CHEBI:57783"/>
        <dbReference type="ChEBI" id="CHEBI:58349"/>
        <dbReference type="ChEBI" id="CHEBI:58703"/>
        <dbReference type="EC" id="1.7.1.13"/>
    </reaction>
</comment>
<comment type="pathway">
    <text evidence="1">tRNA modification; tRNA-queuosine biosynthesis.</text>
</comment>
<comment type="subcellular location">
    <subcellularLocation>
        <location evidence="1">Cytoplasm</location>
    </subcellularLocation>
</comment>
<comment type="similarity">
    <text evidence="1">Belongs to the GTP cyclohydrolase I family. QueF type 1 subfamily.</text>
</comment>
<protein>
    <recommendedName>
        <fullName evidence="1">NADPH-dependent 7-cyano-7-deazaguanine reductase</fullName>
        <ecNumber evidence="1">1.7.1.13</ecNumber>
    </recommendedName>
    <alternativeName>
        <fullName evidence="1">7-cyano-7-carbaguanine reductase</fullName>
    </alternativeName>
    <alternativeName>
        <fullName evidence="1">NADPH-dependent nitrile oxidoreductase</fullName>
    </alternativeName>
    <alternativeName>
        <fullName evidence="1">PreQ(0) reductase</fullName>
    </alternativeName>
</protein>
<accession>B2S630</accession>